<keyword id="KW-0963">Cytoplasm</keyword>
<keyword id="KW-0240">DNA-directed RNA polymerase</keyword>
<keyword id="KW-0548">Nucleotidyltransferase</keyword>
<keyword id="KW-1185">Reference proteome</keyword>
<keyword id="KW-0804">Transcription</keyword>
<keyword id="KW-0808">Transferase</keyword>
<evidence type="ECO:0000255" key="1">
    <source>
        <dbReference type="HAMAP-Rule" id="MF_00192"/>
    </source>
</evidence>
<proteinExistence type="inferred from homology"/>
<sequence length="60" mass="6926">MKGEKYTRFERARIVGARALQIFMGAPVLIRTDSIDPLEIALEEMRLGVIPITVKRDRKR</sequence>
<dbReference type="EC" id="2.7.7.6" evidence="1"/>
<dbReference type="EMBL" id="CP000477">
    <property type="protein sequence ID" value="ABK14270.1"/>
    <property type="molecule type" value="Genomic_DNA"/>
</dbReference>
<dbReference type="RefSeq" id="WP_011695668.1">
    <property type="nucleotide sequence ID" value="NC_008553.1"/>
</dbReference>
<dbReference type="SMR" id="A0B6E6"/>
<dbReference type="STRING" id="349307.Mthe_0479"/>
<dbReference type="GeneID" id="4463096"/>
<dbReference type="KEGG" id="mtp:Mthe_0479"/>
<dbReference type="HOGENOM" id="CLU_112527_5_0_2"/>
<dbReference type="OrthoDB" id="10567at2157"/>
<dbReference type="Proteomes" id="UP000000674">
    <property type="component" value="Chromosome"/>
</dbReference>
<dbReference type="GO" id="GO:0005737">
    <property type="term" value="C:cytoplasm"/>
    <property type="evidence" value="ECO:0007669"/>
    <property type="project" value="UniProtKB-SubCell"/>
</dbReference>
<dbReference type="GO" id="GO:0000428">
    <property type="term" value="C:DNA-directed RNA polymerase complex"/>
    <property type="evidence" value="ECO:0007669"/>
    <property type="project" value="UniProtKB-KW"/>
</dbReference>
<dbReference type="GO" id="GO:0003677">
    <property type="term" value="F:DNA binding"/>
    <property type="evidence" value="ECO:0007669"/>
    <property type="project" value="UniProtKB-UniRule"/>
</dbReference>
<dbReference type="GO" id="GO:0003899">
    <property type="term" value="F:DNA-directed RNA polymerase activity"/>
    <property type="evidence" value="ECO:0007669"/>
    <property type="project" value="UniProtKB-UniRule"/>
</dbReference>
<dbReference type="GO" id="GO:0006360">
    <property type="term" value="P:transcription by RNA polymerase I"/>
    <property type="evidence" value="ECO:0007669"/>
    <property type="project" value="TreeGrafter"/>
</dbReference>
<dbReference type="GO" id="GO:0006366">
    <property type="term" value="P:transcription by RNA polymerase II"/>
    <property type="evidence" value="ECO:0007669"/>
    <property type="project" value="TreeGrafter"/>
</dbReference>
<dbReference type="GO" id="GO:0042797">
    <property type="term" value="P:tRNA transcription by RNA polymerase III"/>
    <property type="evidence" value="ECO:0007669"/>
    <property type="project" value="TreeGrafter"/>
</dbReference>
<dbReference type="Gene3D" id="3.90.940.10">
    <property type="match status" value="1"/>
</dbReference>
<dbReference type="HAMAP" id="MF_00192">
    <property type="entry name" value="RNApol_arch_Rpo6"/>
    <property type="match status" value="1"/>
</dbReference>
<dbReference type="InterPro" id="IPR020708">
    <property type="entry name" value="DNA-dir_RNA_polK_14-18kDa_CS"/>
</dbReference>
<dbReference type="InterPro" id="IPR006110">
    <property type="entry name" value="Pol_omega/Rpo6/RPB6"/>
</dbReference>
<dbReference type="InterPro" id="IPR036161">
    <property type="entry name" value="RPB6/omega-like_sf"/>
</dbReference>
<dbReference type="InterPro" id="IPR006111">
    <property type="entry name" value="Rpo6/Rpb6"/>
</dbReference>
<dbReference type="NCBIfam" id="NF002208">
    <property type="entry name" value="PRK01099.1-3"/>
    <property type="match status" value="1"/>
</dbReference>
<dbReference type="PANTHER" id="PTHR47227">
    <property type="entry name" value="DNA-DIRECTED RNA POLYMERASE SUBUNIT K"/>
    <property type="match status" value="1"/>
</dbReference>
<dbReference type="PANTHER" id="PTHR47227:SF5">
    <property type="entry name" value="DNA-DIRECTED RNA POLYMERASES I, II, AND III SUBUNIT RPABC2"/>
    <property type="match status" value="1"/>
</dbReference>
<dbReference type="Pfam" id="PF01192">
    <property type="entry name" value="RNA_pol_Rpb6"/>
    <property type="match status" value="1"/>
</dbReference>
<dbReference type="PIRSF" id="PIRSF000778">
    <property type="entry name" value="RpoK/RPB6"/>
    <property type="match status" value="1"/>
</dbReference>
<dbReference type="SMART" id="SM01409">
    <property type="entry name" value="RNA_pol_Rpb6"/>
    <property type="match status" value="1"/>
</dbReference>
<dbReference type="SUPFAM" id="SSF63562">
    <property type="entry name" value="RPB6/omega subunit-like"/>
    <property type="match status" value="1"/>
</dbReference>
<dbReference type="PROSITE" id="PS01111">
    <property type="entry name" value="RNA_POL_K_14KD"/>
    <property type="match status" value="1"/>
</dbReference>
<protein>
    <recommendedName>
        <fullName evidence="1">DNA-directed RNA polymerase subunit Rpo6</fullName>
        <ecNumber evidence="1">2.7.7.6</ecNumber>
    </recommendedName>
    <alternativeName>
        <fullName evidence="1">DNA-directed RNA polymerase subunit K</fullName>
    </alternativeName>
</protein>
<reference key="1">
    <citation type="submission" date="2006-10" db="EMBL/GenBank/DDBJ databases">
        <title>Complete sequence of Methanosaeta thermophila PT.</title>
        <authorList>
            <consortium name="US DOE Joint Genome Institute"/>
            <person name="Copeland A."/>
            <person name="Lucas S."/>
            <person name="Lapidus A."/>
            <person name="Barry K."/>
            <person name="Detter J.C."/>
            <person name="Glavina del Rio T."/>
            <person name="Hammon N."/>
            <person name="Israni S."/>
            <person name="Pitluck S."/>
            <person name="Chain P."/>
            <person name="Malfatti S."/>
            <person name="Shin M."/>
            <person name="Vergez L."/>
            <person name="Schmutz J."/>
            <person name="Larimer F."/>
            <person name="Land M."/>
            <person name="Hauser L."/>
            <person name="Kyrpides N."/>
            <person name="Kim E."/>
            <person name="Smith K.S."/>
            <person name="Ingram-Smith C."/>
            <person name="Richardson P."/>
        </authorList>
    </citation>
    <scope>NUCLEOTIDE SEQUENCE [LARGE SCALE GENOMIC DNA]</scope>
    <source>
        <strain>DSM 6194 / JCM 14653 / NBRC 101360 / PT</strain>
    </source>
</reference>
<name>RPO6_METTP</name>
<organism>
    <name type="scientific">Methanothrix thermoacetophila (strain DSM 6194 / JCM 14653 / NBRC 101360 / PT)</name>
    <name type="common">Methanosaeta thermophila</name>
    <dbReference type="NCBI Taxonomy" id="349307"/>
    <lineage>
        <taxon>Archaea</taxon>
        <taxon>Methanobacteriati</taxon>
        <taxon>Methanobacteriota</taxon>
        <taxon>Stenosarchaea group</taxon>
        <taxon>Methanomicrobia</taxon>
        <taxon>Methanotrichales</taxon>
        <taxon>Methanotrichaceae</taxon>
        <taxon>Methanothrix</taxon>
    </lineage>
</organism>
<accession>A0B6E6</accession>
<gene>
    <name evidence="1" type="primary">rpo6</name>
    <name evidence="1" type="synonym">rpoK</name>
    <name type="ordered locus">Mthe_0479</name>
</gene>
<comment type="function">
    <text evidence="1">DNA-dependent RNA polymerase (RNAP) catalyzes the transcription of DNA into RNA using the four ribonucleoside triphosphates as substrates.</text>
</comment>
<comment type="catalytic activity">
    <reaction evidence="1">
        <text>RNA(n) + a ribonucleoside 5'-triphosphate = RNA(n+1) + diphosphate</text>
        <dbReference type="Rhea" id="RHEA:21248"/>
        <dbReference type="Rhea" id="RHEA-COMP:14527"/>
        <dbReference type="Rhea" id="RHEA-COMP:17342"/>
        <dbReference type="ChEBI" id="CHEBI:33019"/>
        <dbReference type="ChEBI" id="CHEBI:61557"/>
        <dbReference type="ChEBI" id="CHEBI:140395"/>
        <dbReference type="EC" id="2.7.7.6"/>
    </reaction>
</comment>
<comment type="subunit">
    <text evidence="1">Part of the RNA polymerase complex.</text>
</comment>
<comment type="subcellular location">
    <subcellularLocation>
        <location evidence="1">Cytoplasm</location>
    </subcellularLocation>
</comment>
<comment type="similarity">
    <text evidence="1">Belongs to the archaeal Rpo6/eukaryotic RPB6 RNA polymerase subunit family.</text>
</comment>
<feature type="chain" id="PRO_1000194736" description="DNA-directed RNA polymerase subunit Rpo6">
    <location>
        <begin position="1"/>
        <end position="60"/>
    </location>
</feature>